<feature type="chain" id="PRO_0000246101" description="Probable Fe(2+)-trafficking protein">
    <location>
        <begin position="1"/>
        <end position="90"/>
    </location>
</feature>
<gene>
    <name type="ordered locus">NTHI0920</name>
</gene>
<evidence type="ECO:0000255" key="1">
    <source>
        <dbReference type="HAMAP-Rule" id="MF_00686"/>
    </source>
</evidence>
<sequence length="90" mass="10582">MARTVFCEYLKKEAEGLDFQLYPGELGKRIFDSVSKQAWGEWIKKQTMLVNEKKLNMMNAEHRKLLEQEMVNFLFEGKDVHIEGYVPPSN</sequence>
<comment type="function">
    <text evidence="1">Could be a mediator in iron transactions between iron acquisition and iron-requiring processes, such as synthesis and/or repair of Fe-S clusters in biosynthetic enzymes.</text>
</comment>
<comment type="similarity">
    <text evidence="1">Belongs to the Fe(2+)-trafficking protein family.</text>
</comment>
<protein>
    <recommendedName>
        <fullName evidence="1">Probable Fe(2+)-trafficking protein</fullName>
    </recommendedName>
</protein>
<proteinExistence type="inferred from homology"/>
<dbReference type="EMBL" id="CP000057">
    <property type="protein sequence ID" value="AAX87808.1"/>
    <property type="molecule type" value="Genomic_DNA"/>
</dbReference>
<dbReference type="RefSeq" id="WP_005648477.1">
    <property type="nucleotide sequence ID" value="NC_007146.2"/>
</dbReference>
<dbReference type="SMR" id="Q4QMD9"/>
<dbReference type="KEGG" id="hit:NTHI0920"/>
<dbReference type="HOGENOM" id="CLU_170994_0_0_6"/>
<dbReference type="Proteomes" id="UP000002525">
    <property type="component" value="Chromosome"/>
</dbReference>
<dbReference type="GO" id="GO:0005829">
    <property type="term" value="C:cytosol"/>
    <property type="evidence" value="ECO:0007669"/>
    <property type="project" value="TreeGrafter"/>
</dbReference>
<dbReference type="GO" id="GO:0005506">
    <property type="term" value="F:iron ion binding"/>
    <property type="evidence" value="ECO:0007669"/>
    <property type="project" value="UniProtKB-UniRule"/>
</dbReference>
<dbReference type="GO" id="GO:0034599">
    <property type="term" value="P:cellular response to oxidative stress"/>
    <property type="evidence" value="ECO:0007669"/>
    <property type="project" value="TreeGrafter"/>
</dbReference>
<dbReference type="FunFam" id="1.10.3880.10:FF:000001">
    <property type="entry name" value="Probable Fe(2+)-trafficking protein"/>
    <property type="match status" value="1"/>
</dbReference>
<dbReference type="Gene3D" id="1.10.3880.10">
    <property type="entry name" value="Fe(II) trafficking protein YggX"/>
    <property type="match status" value="1"/>
</dbReference>
<dbReference type="HAMAP" id="MF_00686">
    <property type="entry name" value="Fe_traffic_YggX"/>
    <property type="match status" value="1"/>
</dbReference>
<dbReference type="InterPro" id="IPR007457">
    <property type="entry name" value="Fe_traffick_prot_YggX"/>
</dbReference>
<dbReference type="InterPro" id="IPR036766">
    <property type="entry name" value="Fe_traffick_prot_YggX_sf"/>
</dbReference>
<dbReference type="NCBIfam" id="NF003817">
    <property type="entry name" value="PRK05408.1"/>
    <property type="match status" value="1"/>
</dbReference>
<dbReference type="PANTHER" id="PTHR36965">
    <property type="entry name" value="FE(2+)-TRAFFICKING PROTEIN-RELATED"/>
    <property type="match status" value="1"/>
</dbReference>
<dbReference type="PANTHER" id="PTHR36965:SF1">
    <property type="entry name" value="FE(2+)-TRAFFICKING PROTEIN-RELATED"/>
    <property type="match status" value="1"/>
</dbReference>
<dbReference type="Pfam" id="PF04362">
    <property type="entry name" value="Iron_traffic"/>
    <property type="match status" value="1"/>
</dbReference>
<dbReference type="PIRSF" id="PIRSF029827">
    <property type="entry name" value="Fe_traffic_YggX"/>
    <property type="match status" value="1"/>
</dbReference>
<dbReference type="SUPFAM" id="SSF111148">
    <property type="entry name" value="YggX-like"/>
    <property type="match status" value="1"/>
</dbReference>
<organism>
    <name type="scientific">Haemophilus influenzae (strain 86-028NP)</name>
    <dbReference type="NCBI Taxonomy" id="281310"/>
    <lineage>
        <taxon>Bacteria</taxon>
        <taxon>Pseudomonadati</taxon>
        <taxon>Pseudomonadota</taxon>
        <taxon>Gammaproteobacteria</taxon>
        <taxon>Pasteurellales</taxon>
        <taxon>Pasteurellaceae</taxon>
        <taxon>Haemophilus</taxon>
    </lineage>
</organism>
<keyword id="KW-0408">Iron</keyword>
<accession>Q4QMD9</accession>
<reference key="1">
    <citation type="journal article" date="2005" name="J. Bacteriol.">
        <title>Genomic sequence of an otitis media isolate of nontypeable Haemophilus influenzae: comparative study with H. influenzae serotype d, strain KW20.</title>
        <authorList>
            <person name="Harrison A."/>
            <person name="Dyer D.W."/>
            <person name="Gillaspy A."/>
            <person name="Ray W.C."/>
            <person name="Mungur R."/>
            <person name="Carson M.B."/>
            <person name="Zhong H."/>
            <person name="Gipson J."/>
            <person name="Gipson M."/>
            <person name="Johnson L.S."/>
            <person name="Lewis L."/>
            <person name="Bakaletz L.O."/>
            <person name="Munson R.S. Jr."/>
        </authorList>
    </citation>
    <scope>NUCLEOTIDE SEQUENCE [LARGE SCALE GENOMIC DNA]</scope>
    <source>
        <strain>86-028NP</strain>
    </source>
</reference>
<name>FETP_HAEI8</name>